<evidence type="ECO:0000255" key="1">
    <source>
        <dbReference type="HAMAP-Rule" id="MF_00446"/>
    </source>
</evidence>
<keyword id="KW-0068">Autocatalytic cleavage</keyword>
<keyword id="KW-0963">Cytoplasm</keyword>
<keyword id="KW-0210">Decarboxylase</keyword>
<keyword id="KW-0456">Lyase</keyword>
<keyword id="KW-0566">Pantothenate biosynthesis</keyword>
<keyword id="KW-0670">Pyruvate</keyword>
<keyword id="KW-1185">Reference proteome</keyword>
<keyword id="KW-0704">Schiff base</keyword>
<keyword id="KW-0865">Zymogen</keyword>
<gene>
    <name evidence="1" type="primary">panD</name>
    <name type="ordered locus">Mpe_A3569</name>
</gene>
<accession>A2SLT3</accession>
<feature type="chain" id="PRO_0000307013" description="Aspartate 1-decarboxylase beta chain" evidence="1">
    <location>
        <begin position="1"/>
        <end position="24"/>
    </location>
</feature>
<feature type="chain" id="PRO_0000307014" description="Aspartate 1-decarboxylase alpha chain" evidence="1">
    <location>
        <begin position="25"/>
        <end position="120"/>
    </location>
</feature>
<feature type="active site" description="Schiff-base intermediate with substrate; via pyruvic acid" evidence="1">
    <location>
        <position position="25"/>
    </location>
</feature>
<feature type="active site" description="Proton donor" evidence="1">
    <location>
        <position position="58"/>
    </location>
</feature>
<feature type="binding site" evidence="1">
    <location>
        <position position="57"/>
    </location>
    <ligand>
        <name>substrate</name>
    </ligand>
</feature>
<feature type="binding site" evidence="1">
    <location>
        <begin position="73"/>
        <end position="75"/>
    </location>
    <ligand>
        <name>substrate</name>
    </ligand>
</feature>
<feature type="modified residue" description="Pyruvic acid (Ser)" evidence="1">
    <location>
        <position position="25"/>
    </location>
</feature>
<proteinExistence type="inferred from homology"/>
<protein>
    <recommendedName>
        <fullName evidence="1">Aspartate 1-decarboxylase</fullName>
        <ecNumber evidence="1">4.1.1.11</ecNumber>
    </recommendedName>
    <alternativeName>
        <fullName evidence="1">Aspartate alpha-decarboxylase</fullName>
    </alternativeName>
    <component>
        <recommendedName>
            <fullName evidence="1">Aspartate 1-decarboxylase beta chain</fullName>
        </recommendedName>
    </component>
    <component>
        <recommendedName>
            <fullName evidence="1">Aspartate 1-decarboxylase alpha chain</fullName>
        </recommendedName>
    </component>
</protein>
<dbReference type="EC" id="4.1.1.11" evidence="1"/>
<dbReference type="EMBL" id="CP000555">
    <property type="protein sequence ID" value="ABM96522.1"/>
    <property type="molecule type" value="Genomic_DNA"/>
</dbReference>
<dbReference type="RefSeq" id="WP_011831142.1">
    <property type="nucleotide sequence ID" value="NC_008825.1"/>
</dbReference>
<dbReference type="SMR" id="A2SLT3"/>
<dbReference type="STRING" id="420662.Mpe_A3569"/>
<dbReference type="KEGG" id="mpt:Mpe_A3569"/>
<dbReference type="eggNOG" id="COG0853">
    <property type="taxonomic scope" value="Bacteria"/>
</dbReference>
<dbReference type="HOGENOM" id="CLU_115305_2_0_4"/>
<dbReference type="UniPathway" id="UPA00028">
    <property type="reaction ID" value="UER00002"/>
</dbReference>
<dbReference type="Proteomes" id="UP000000366">
    <property type="component" value="Chromosome"/>
</dbReference>
<dbReference type="GO" id="GO:0005829">
    <property type="term" value="C:cytosol"/>
    <property type="evidence" value="ECO:0007669"/>
    <property type="project" value="TreeGrafter"/>
</dbReference>
<dbReference type="GO" id="GO:0004068">
    <property type="term" value="F:aspartate 1-decarboxylase activity"/>
    <property type="evidence" value="ECO:0007669"/>
    <property type="project" value="UniProtKB-UniRule"/>
</dbReference>
<dbReference type="GO" id="GO:0006523">
    <property type="term" value="P:alanine biosynthetic process"/>
    <property type="evidence" value="ECO:0007669"/>
    <property type="project" value="InterPro"/>
</dbReference>
<dbReference type="GO" id="GO:0015940">
    <property type="term" value="P:pantothenate biosynthetic process"/>
    <property type="evidence" value="ECO:0007669"/>
    <property type="project" value="UniProtKB-UniRule"/>
</dbReference>
<dbReference type="CDD" id="cd06919">
    <property type="entry name" value="Asp_decarbox"/>
    <property type="match status" value="1"/>
</dbReference>
<dbReference type="Gene3D" id="2.40.40.20">
    <property type="match status" value="1"/>
</dbReference>
<dbReference type="HAMAP" id="MF_00446">
    <property type="entry name" value="PanD"/>
    <property type="match status" value="1"/>
</dbReference>
<dbReference type="InterPro" id="IPR009010">
    <property type="entry name" value="Asp_de-COase-like_dom_sf"/>
</dbReference>
<dbReference type="InterPro" id="IPR003190">
    <property type="entry name" value="Asp_decarbox"/>
</dbReference>
<dbReference type="NCBIfam" id="TIGR00223">
    <property type="entry name" value="panD"/>
    <property type="match status" value="1"/>
</dbReference>
<dbReference type="PANTHER" id="PTHR21012">
    <property type="entry name" value="ASPARTATE 1-DECARBOXYLASE"/>
    <property type="match status" value="1"/>
</dbReference>
<dbReference type="PANTHER" id="PTHR21012:SF0">
    <property type="entry name" value="ASPARTATE 1-DECARBOXYLASE"/>
    <property type="match status" value="1"/>
</dbReference>
<dbReference type="Pfam" id="PF02261">
    <property type="entry name" value="Asp_decarbox"/>
    <property type="match status" value="1"/>
</dbReference>
<dbReference type="PIRSF" id="PIRSF006246">
    <property type="entry name" value="Asp_decarbox"/>
    <property type="match status" value="1"/>
</dbReference>
<dbReference type="SUPFAM" id="SSF50692">
    <property type="entry name" value="ADC-like"/>
    <property type="match status" value="1"/>
</dbReference>
<comment type="function">
    <text evidence="1">Catalyzes the pyruvoyl-dependent decarboxylation of aspartate to produce beta-alanine.</text>
</comment>
<comment type="catalytic activity">
    <reaction evidence="1">
        <text>L-aspartate + H(+) = beta-alanine + CO2</text>
        <dbReference type="Rhea" id="RHEA:19497"/>
        <dbReference type="ChEBI" id="CHEBI:15378"/>
        <dbReference type="ChEBI" id="CHEBI:16526"/>
        <dbReference type="ChEBI" id="CHEBI:29991"/>
        <dbReference type="ChEBI" id="CHEBI:57966"/>
        <dbReference type="EC" id="4.1.1.11"/>
    </reaction>
</comment>
<comment type="cofactor">
    <cofactor evidence="1">
        <name>pyruvate</name>
        <dbReference type="ChEBI" id="CHEBI:15361"/>
    </cofactor>
    <text evidence="1">Binds 1 pyruvoyl group covalently per subunit.</text>
</comment>
<comment type="pathway">
    <text evidence="1">Cofactor biosynthesis; (R)-pantothenate biosynthesis; beta-alanine from L-aspartate: step 1/1.</text>
</comment>
<comment type="subunit">
    <text evidence="1">Heterooctamer of four alpha and four beta subunits.</text>
</comment>
<comment type="subcellular location">
    <subcellularLocation>
        <location evidence="1">Cytoplasm</location>
    </subcellularLocation>
</comment>
<comment type="PTM">
    <text evidence="1">Is synthesized initially as an inactive proenzyme, which is activated by self-cleavage at a specific serine bond to produce a beta-subunit with a hydroxyl group at its C-terminus and an alpha-subunit with a pyruvoyl group at its N-terminus.</text>
</comment>
<comment type="similarity">
    <text evidence="1">Belongs to the PanD family.</text>
</comment>
<reference key="1">
    <citation type="journal article" date="2007" name="J. Bacteriol.">
        <title>Whole-genome analysis of the methyl tert-butyl ether-degrading beta-proteobacterium Methylibium petroleiphilum PM1.</title>
        <authorList>
            <person name="Kane S.R."/>
            <person name="Chakicherla A.Y."/>
            <person name="Chain P.S.G."/>
            <person name="Schmidt R."/>
            <person name="Shin M.W."/>
            <person name="Legler T.C."/>
            <person name="Scow K.M."/>
            <person name="Larimer F.W."/>
            <person name="Lucas S.M."/>
            <person name="Richardson P.M."/>
            <person name="Hristova K.R."/>
        </authorList>
    </citation>
    <scope>NUCLEOTIDE SEQUENCE [LARGE SCALE GENOMIC DNA]</scope>
    <source>
        <strain>ATCC BAA-1232 / LMG 22953 / PM1</strain>
    </source>
</reference>
<name>PAND_METPP</name>
<sequence length="120" mass="13092">MNRLMLRAKLHRATVTEADLHYEGSCGIDAALLEAADMREFEQIELYNVNNGERFSTYVIPAPPGSGVISLNGAAARKAHVGDLLIICTYAPMNDAEVATHKPKVVLLGPGNRIESVRKF</sequence>
<organism>
    <name type="scientific">Methylibium petroleiphilum (strain ATCC BAA-1232 / LMG 22953 / PM1)</name>
    <dbReference type="NCBI Taxonomy" id="420662"/>
    <lineage>
        <taxon>Bacteria</taxon>
        <taxon>Pseudomonadati</taxon>
        <taxon>Pseudomonadota</taxon>
        <taxon>Betaproteobacteria</taxon>
        <taxon>Burkholderiales</taxon>
        <taxon>Sphaerotilaceae</taxon>
        <taxon>Methylibium</taxon>
    </lineage>
</organism>